<sequence>MDKFNPVDMSVWQGRQDPEDGELALRWHDKVQPWPQAGRAAPGVALVGFACDEGVRRNKGRVGAAGAPLAVRKLLANSAWHLGRPVYDRGDVNCEDGDLDAAHGRLAERVARLLDEGHFPLVLGGGHEVAFGSWSGLNRHLAGRGRVGIINFDAHFDLRMKLEQASSGTPFFQIAEQCAIQGTPFTYACLGVAETANTQALFARAEALGVWHVLDEAMTPAELPALLSGLDAFIARCDHLYLTIDLDVLPAAVMPGVSAPAARGVELAVIEPLIAHIRASGKLRLADLAEYNPSLDQDNRSARVAARLVHQLIK</sequence>
<proteinExistence type="inferred from homology"/>
<comment type="function">
    <text evidence="1">Catalyzes the conversion of N-formimidoyl-L-glutamate to L-glutamate and formamide.</text>
</comment>
<comment type="catalytic activity">
    <reaction evidence="1">
        <text>N-formimidoyl-L-glutamate + H2O = formamide + L-glutamate</text>
        <dbReference type="Rhea" id="RHEA:22492"/>
        <dbReference type="ChEBI" id="CHEBI:15377"/>
        <dbReference type="ChEBI" id="CHEBI:16397"/>
        <dbReference type="ChEBI" id="CHEBI:29985"/>
        <dbReference type="ChEBI" id="CHEBI:58928"/>
        <dbReference type="EC" id="3.5.3.8"/>
    </reaction>
</comment>
<comment type="cofactor">
    <cofactor evidence="1">
        <name>Mn(2+)</name>
        <dbReference type="ChEBI" id="CHEBI:29035"/>
    </cofactor>
    <text evidence="1">Binds 2 manganese ions per subunit.</text>
</comment>
<comment type="pathway">
    <text evidence="1">Amino-acid degradation; L-histidine degradation into L-glutamate; L-glutamate from N-formimidoyl-L-glutamate (hydrolase route): step 1/1.</text>
</comment>
<comment type="similarity">
    <text evidence="1">Belongs to the arginase family.</text>
</comment>
<accession>A0KF85</accession>
<keyword id="KW-0369">Histidine metabolism</keyword>
<keyword id="KW-0378">Hydrolase</keyword>
<keyword id="KW-0464">Manganese</keyword>
<keyword id="KW-0479">Metal-binding</keyword>
<keyword id="KW-1185">Reference proteome</keyword>
<name>HUTG_AERHH</name>
<gene>
    <name evidence="1" type="primary">hutG</name>
    <name type="ordered locus">AHA_0378</name>
</gene>
<reference key="1">
    <citation type="journal article" date="2006" name="J. Bacteriol.">
        <title>Genome sequence of Aeromonas hydrophila ATCC 7966T: jack of all trades.</title>
        <authorList>
            <person name="Seshadri R."/>
            <person name="Joseph S.W."/>
            <person name="Chopra A.K."/>
            <person name="Sha J."/>
            <person name="Shaw J."/>
            <person name="Graf J."/>
            <person name="Haft D.H."/>
            <person name="Wu M."/>
            <person name="Ren Q."/>
            <person name="Rosovitz M.J."/>
            <person name="Madupu R."/>
            <person name="Tallon L."/>
            <person name="Kim M."/>
            <person name="Jin S."/>
            <person name="Vuong H."/>
            <person name="Stine O.C."/>
            <person name="Ali A."/>
            <person name="Horneman A.J."/>
            <person name="Heidelberg J.F."/>
        </authorList>
    </citation>
    <scope>NUCLEOTIDE SEQUENCE [LARGE SCALE GENOMIC DNA]</scope>
    <source>
        <strain>ATCC 7966 / DSM 30187 / BCRC 13018 / CCUG 14551 / JCM 1027 / KCTC 2358 / NCIMB 9240 / NCTC 8049</strain>
    </source>
</reference>
<evidence type="ECO:0000255" key="1">
    <source>
        <dbReference type="HAMAP-Rule" id="MF_00737"/>
    </source>
</evidence>
<dbReference type="EC" id="3.5.3.8" evidence="1"/>
<dbReference type="EMBL" id="CP000462">
    <property type="protein sequence ID" value="ABK39322.1"/>
    <property type="molecule type" value="Genomic_DNA"/>
</dbReference>
<dbReference type="RefSeq" id="WP_011704354.1">
    <property type="nucleotide sequence ID" value="NC_008570.1"/>
</dbReference>
<dbReference type="RefSeq" id="YP_854907.1">
    <property type="nucleotide sequence ID" value="NC_008570.1"/>
</dbReference>
<dbReference type="SMR" id="A0KF85"/>
<dbReference type="STRING" id="380703.AHA_0378"/>
<dbReference type="EnsemblBacteria" id="ABK39322">
    <property type="protein sequence ID" value="ABK39322"/>
    <property type="gene ID" value="AHA_0378"/>
</dbReference>
<dbReference type="GeneID" id="4486962"/>
<dbReference type="KEGG" id="aha:AHA_0378"/>
<dbReference type="PATRIC" id="fig|380703.7.peg.365"/>
<dbReference type="eggNOG" id="COG0010">
    <property type="taxonomic scope" value="Bacteria"/>
</dbReference>
<dbReference type="HOGENOM" id="CLU_039478_2_0_6"/>
<dbReference type="OrthoDB" id="9789727at2"/>
<dbReference type="UniPathway" id="UPA00379">
    <property type="reaction ID" value="UER00552"/>
</dbReference>
<dbReference type="Proteomes" id="UP000000756">
    <property type="component" value="Chromosome"/>
</dbReference>
<dbReference type="GO" id="GO:0008783">
    <property type="term" value="F:agmatinase activity"/>
    <property type="evidence" value="ECO:0007669"/>
    <property type="project" value="TreeGrafter"/>
</dbReference>
<dbReference type="GO" id="GO:0050415">
    <property type="term" value="F:formimidoylglutamase activity"/>
    <property type="evidence" value="ECO:0007669"/>
    <property type="project" value="UniProtKB-UniRule"/>
</dbReference>
<dbReference type="GO" id="GO:0030145">
    <property type="term" value="F:manganese ion binding"/>
    <property type="evidence" value="ECO:0007669"/>
    <property type="project" value="UniProtKB-UniRule"/>
</dbReference>
<dbReference type="GO" id="GO:0019556">
    <property type="term" value="P:L-histidine catabolic process to glutamate and formamide"/>
    <property type="evidence" value="ECO:0007669"/>
    <property type="project" value="UniProtKB-UniPathway"/>
</dbReference>
<dbReference type="GO" id="GO:0019557">
    <property type="term" value="P:L-histidine catabolic process to glutamate and formate"/>
    <property type="evidence" value="ECO:0007669"/>
    <property type="project" value="UniProtKB-UniPathway"/>
</dbReference>
<dbReference type="GO" id="GO:0033389">
    <property type="term" value="P:putrescine biosynthetic process from arginine, via agmatine"/>
    <property type="evidence" value="ECO:0007669"/>
    <property type="project" value="TreeGrafter"/>
</dbReference>
<dbReference type="CDD" id="cd09988">
    <property type="entry name" value="Formimidoylglutamase"/>
    <property type="match status" value="1"/>
</dbReference>
<dbReference type="Gene3D" id="3.40.800.10">
    <property type="entry name" value="Ureohydrolase domain"/>
    <property type="match status" value="1"/>
</dbReference>
<dbReference type="HAMAP" id="MF_00737">
    <property type="entry name" value="Formimidoylglutam"/>
    <property type="match status" value="1"/>
</dbReference>
<dbReference type="InterPro" id="IPR005923">
    <property type="entry name" value="HutG"/>
</dbReference>
<dbReference type="InterPro" id="IPR006035">
    <property type="entry name" value="Ureohydrolase"/>
</dbReference>
<dbReference type="InterPro" id="IPR023696">
    <property type="entry name" value="Ureohydrolase_dom_sf"/>
</dbReference>
<dbReference type="InterPro" id="IPR020855">
    <property type="entry name" value="Ureohydrolase_Mn_BS"/>
</dbReference>
<dbReference type="NCBIfam" id="TIGR01227">
    <property type="entry name" value="hutG"/>
    <property type="match status" value="1"/>
</dbReference>
<dbReference type="PANTHER" id="PTHR11358">
    <property type="entry name" value="ARGINASE/AGMATINASE"/>
    <property type="match status" value="1"/>
</dbReference>
<dbReference type="PANTHER" id="PTHR11358:SF35">
    <property type="entry name" value="FORMIMIDOYLGLUTAMASE"/>
    <property type="match status" value="1"/>
</dbReference>
<dbReference type="Pfam" id="PF00491">
    <property type="entry name" value="Arginase"/>
    <property type="match status" value="1"/>
</dbReference>
<dbReference type="PRINTS" id="PR00116">
    <property type="entry name" value="ARGINASE"/>
</dbReference>
<dbReference type="SUPFAM" id="SSF52768">
    <property type="entry name" value="Arginase/deacetylase"/>
    <property type="match status" value="1"/>
</dbReference>
<dbReference type="PROSITE" id="PS01053">
    <property type="entry name" value="ARGINASE_1"/>
    <property type="match status" value="1"/>
</dbReference>
<dbReference type="PROSITE" id="PS51409">
    <property type="entry name" value="ARGINASE_2"/>
    <property type="match status" value="1"/>
</dbReference>
<protein>
    <recommendedName>
        <fullName evidence="1">Formimidoylglutamase</fullName>
        <ecNumber evidence="1">3.5.3.8</ecNumber>
    </recommendedName>
    <alternativeName>
        <fullName evidence="1">Formiminoglutamase</fullName>
    </alternativeName>
    <alternativeName>
        <fullName evidence="1">Formiminoglutamate hydrolase</fullName>
    </alternativeName>
</protein>
<organism>
    <name type="scientific">Aeromonas hydrophila subsp. hydrophila (strain ATCC 7966 / DSM 30187 / BCRC 13018 / CCUG 14551 / JCM 1027 / KCTC 2358 / NCIMB 9240 / NCTC 8049)</name>
    <dbReference type="NCBI Taxonomy" id="380703"/>
    <lineage>
        <taxon>Bacteria</taxon>
        <taxon>Pseudomonadati</taxon>
        <taxon>Pseudomonadota</taxon>
        <taxon>Gammaproteobacteria</taxon>
        <taxon>Aeromonadales</taxon>
        <taxon>Aeromonadaceae</taxon>
        <taxon>Aeromonas</taxon>
    </lineage>
</organism>
<feature type="chain" id="PRO_1000046295" description="Formimidoylglutamase">
    <location>
        <begin position="1"/>
        <end position="314"/>
    </location>
</feature>
<feature type="binding site" evidence="1">
    <location>
        <position position="127"/>
    </location>
    <ligand>
        <name>Mn(2+)</name>
        <dbReference type="ChEBI" id="CHEBI:29035"/>
        <label>1</label>
    </ligand>
</feature>
<feature type="binding site" evidence="1">
    <location>
        <position position="153"/>
    </location>
    <ligand>
        <name>Mn(2+)</name>
        <dbReference type="ChEBI" id="CHEBI:29035"/>
        <label>1</label>
    </ligand>
</feature>
<feature type="binding site" evidence="1">
    <location>
        <position position="153"/>
    </location>
    <ligand>
        <name>Mn(2+)</name>
        <dbReference type="ChEBI" id="CHEBI:29035"/>
        <label>2</label>
    </ligand>
</feature>
<feature type="binding site" evidence="1">
    <location>
        <position position="155"/>
    </location>
    <ligand>
        <name>Mn(2+)</name>
        <dbReference type="ChEBI" id="CHEBI:29035"/>
        <label>2</label>
    </ligand>
</feature>
<feature type="binding site" evidence="1">
    <location>
        <position position="157"/>
    </location>
    <ligand>
        <name>Mn(2+)</name>
        <dbReference type="ChEBI" id="CHEBI:29035"/>
        <label>1</label>
    </ligand>
</feature>
<feature type="binding site" evidence="1">
    <location>
        <position position="245"/>
    </location>
    <ligand>
        <name>Mn(2+)</name>
        <dbReference type="ChEBI" id="CHEBI:29035"/>
        <label>1</label>
    </ligand>
</feature>
<feature type="binding site" evidence="1">
    <location>
        <position position="245"/>
    </location>
    <ligand>
        <name>Mn(2+)</name>
        <dbReference type="ChEBI" id="CHEBI:29035"/>
        <label>2</label>
    </ligand>
</feature>
<feature type="binding site" evidence="1">
    <location>
        <position position="247"/>
    </location>
    <ligand>
        <name>Mn(2+)</name>
        <dbReference type="ChEBI" id="CHEBI:29035"/>
        <label>2</label>
    </ligand>
</feature>